<accession>Q680Z7</accession>
<accession>O80485</accession>
<accession>Q6ICY6</accession>
<sequence>MFLFSSRRITSLRSYTIIKHSSCYSTLVSDGNIFSIQHFQSLMQKYESNLKIIHQLHSHFTTSGFLLLHQKQNSGKLFLFNPLLRCYSLGETPLHAYFLYDQLQRLHFLSDHNKSLPPFDSFTYLFLLKASSNPRFPSLLLGIGLHGLTLKLGFESHVYVQTALVGMYLVGGNMIDAHKVFDEMPERNPVTWNVMITGLTNLGDFEKALCFLEKMPNRTVVSWTTIIDGYARVDKPKEAILLFSRMVACDAIKPNEITILAILPAVWNLGDLKMCGSVHAYVGKRGFVPCDIRVTNSLIDAYAKCGCIQSAFKFFIEIPNGRKNLVSWTTMISAFAIHGMGKEAVSMFKDMERLGLKPNRVTMISVLNACSHGGLAEEEFLEFFNTMVNEYKITPDVKHYGCLVDMLRRKGRLEEAEKIALEIPIEEKAVVWRMLLGACSVYDDAELAERVTRKLMELERSHGGDYVLMSNIFCGTGRFLDAQRFRKQMDVRGVAKLPGHSQVT</sequence>
<organism>
    <name type="scientific">Arabidopsis thaliana</name>
    <name type="common">Mouse-ear cress</name>
    <dbReference type="NCBI Taxonomy" id="3702"/>
    <lineage>
        <taxon>Eukaryota</taxon>
        <taxon>Viridiplantae</taxon>
        <taxon>Streptophyta</taxon>
        <taxon>Embryophyta</taxon>
        <taxon>Tracheophyta</taxon>
        <taxon>Spermatophyta</taxon>
        <taxon>Magnoliopsida</taxon>
        <taxon>eudicotyledons</taxon>
        <taxon>Gunneridae</taxon>
        <taxon>Pentapetalae</taxon>
        <taxon>rosids</taxon>
        <taxon>malvids</taxon>
        <taxon>Brassicales</taxon>
        <taxon>Brassicaceae</taxon>
        <taxon>Camelineae</taxon>
        <taxon>Arabidopsis</taxon>
    </lineage>
</organism>
<keyword id="KW-0496">Mitochondrion</keyword>
<keyword id="KW-1185">Reference proteome</keyword>
<keyword id="KW-0677">Repeat</keyword>
<keyword id="KW-0809">Transit peptide</keyword>
<proteinExistence type="evidence at transcript level"/>
<protein>
    <recommendedName>
        <fullName>Pentatricopeptide repeat-containing protein At1g09220, mitochondrial</fullName>
    </recommendedName>
</protein>
<dbReference type="EMBL" id="AC003114">
    <property type="protein sequence ID" value="AAC24094.1"/>
    <property type="status" value="ALT_SEQ"/>
    <property type="molecule type" value="Genomic_DNA"/>
</dbReference>
<dbReference type="EMBL" id="CP002684">
    <property type="protein sequence ID" value="AEE28415.1"/>
    <property type="molecule type" value="Genomic_DNA"/>
</dbReference>
<dbReference type="EMBL" id="AK175431">
    <property type="protein sequence ID" value="BAD43194.1"/>
    <property type="molecule type" value="mRNA"/>
</dbReference>
<dbReference type="EMBL" id="AK175720">
    <property type="protein sequence ID" value="BAD43483.1"/>
    <property type="molecule type" value="mRNA"/>
</dbReference>
<dbReference type="EMBL" id="AK175867">
    <property type="protein sequence ID" value="BAD43630.1"/>
    <property type="molecule type" value="mRNA"/>
</dbReference>
<dbReference type="EMBL" id="AK220750">
    <property type="protein sequence ID" value="BAD93927.1"/>
    <property type="molecule type" value="mRNA"/>
</dbReference>
<dbReference type="EMBL" id="BT014887">
    <property type="protein sequence ID" value="AAT42379.1"/>
    <property type="molecule type" value="mRNA"/>
</dbReference>
<dbReference type="PIR" id="A86225">
    <property type="entry name" value="A86225"/>
</dbReference>
<dbReference type="RefSeq" id="NP_172393.2">
    <property type="nucleotide sequence ID" value="NM_100792.3"/>
</dbReference>
<dbReference type="SMR" id="Q680Z7"/>
<dbReference type="FunCoup" id="Q680Z7">
    <property type="interactions" value="444"/>
</dbReference>
<dbReference type="STRING" id="3702.Q680Z7"/>
<dbReference type="PaxDb" id="3702-AT1G09220.1"/>
<dbReference type="EnsemblPlants" id="AT1G09220.1">
    <property type="protein sequence ID" value="AT1G09220.1"/>
    <property type="gene ID" value="AT1G09220"/>
</dbReference>
<dbReference type="GeneID" id="837442"/>
<dbReference type="Gramene" id="AT1G09220.1">
    <property type="protein sequence ID" value="AT1G09220.1"/>
    <property type="gene ID" value="AT1G09220"/>
</dbReference>
<dbReference type="KEGG" id="ath:AT1G09220"/>
<dbReference type="Araport" id="AT1G09220"/>
<dbReference type="TAIR" id="AT1G09220"/>
<dbReference type="eggNOG" id="KOG4197">
    <property type="taxonomic scope" value="Eukaryota"/>
</dbReference>
<dbReference type="HOGENOM" id="CLU_002706_0_6_1"/>
<dbReference type="InParanoid" id="Q680Z7"/>
<dbReference type="OMA" id="MSNIFCG"/>
<dbReference type="PhylomeDB" id="Q680Z7"/>
<dbReference type="PRO" id="PR:Q680Z7"/>
<dbReference type="Proteomes" id="UP000006548">
    <property type="component" value="Chromosome 1"/>
</dbReference>
<dbReference type="ExpressionAtlas" id="Q680Z7">
    <property type="expression patterns" value="baseline and differential"/>
</dbReference>
<dbReference type="GO" id="GO:0022626">
    <property type="term" value="C:cytosolic ribosome"/>
    <property type="evidence" value="ECO:0007005"/>
    <property type="project" value="TAIR"/>
</dbReference>
<dbReference type="GO" id="GO:0005739">
    <property type="term" value="C:mitochondrion"/>
    <property type="evidence" value="ECO:0007669"/>
    <property type="project" value="UniProtKB-SubCell"/>
</dbReference>
<dbReference type="GO" id="GO:0003723">
    <property type="term" value="F:RNA binding"/>
    <property type="evidence" value="ECO:0007669"/>
    <property type="project" value="InterPro"/>
</dbReference>
<dbReference type="GO" id="GO:0009451">
    <property type="term" value="P:RNA modification"/>
    <property type="evidence" value="ECO:0007669"/>
    <property type="project" value="InterPro"/>
</dbReference>
<dbReference type="FunFam" id="1.25.40.10:FF:002944">
    <property type="entry name" value="Pentatricopeptide repeat-containing protein At1g09220, mitochondrial"/>
    <property type="match status" value="1"/>
</dbReference>
<dbReference type="FunFam" id="1.25.40.10:FF:001213">
    <property type="entry name" value="Pentatricopeptide repeat-containing protein, mitochondrial"/>
    <property type="match status" value="1"/>
</dbReference>
<dbReference type="Gene3D" id="1.25.40.10">
    <property type="entry name" value="Tetratricopeptide repeat domain"/>
    <property type="match status" value="3"/>
</dbReference>
<dbReference type="InterPro" id="IPR046848">
    <property type="entry name" value="E_motif"/>
</dbReference>
<dbReference type="InterPro" id="IPR002885">
    <property type="entry name" value="Pentatricopeptide_rpt"/>
</dbReference>
<dbReference type="InterPro" id="IPR046960">
    <property type="entry name" value="PPR_At4g14850-like_plant"/>
</dbReference>
<dbReference type="InterPro" id="IPR011990">
    <property type="entry name" value="TPR-like_helical_dom_sf"/>
</dbReference>
<dbReference type="NCBIfam" id="TIGR00756">
    <property type="entry name" value="PPR"/>
    <property type="match status" value="3"/>
</dbReference>
<dbReference type="PANTHER" id="PTHR47926:SF460">
    <property type="entry name" value="OS01G0815900 PROTEIN"/>
    <property type="match status" value="1"/>
</dbReference>
<dbReference type="PANTHER" id="PTHR47926">
    <property type="entry name" value="PENTATRICOPEPTIDE REPEAT-CONTAINING PROTEIN"/>
    <property type="match status" value="1"/>
</dbReference>
<dbReference type="Pfam" id="PF20431">
    <property type="entry name" value="E_motif"/>
    <property type="match status" value="1"/>
</dbReference>
<dbReference type="Pfam" id="PF01535">
    <property type="entry name" value="PPR"/>
    <property type="match status" value="3"/>
</dbReference>
<dbReference type="Pfam" id="PF13041">
    <property type="entry name" value="PPR_2"/>
    <property type="match status" value="2"/>
</dbReference>
<dbReference type="PROSITE" id="PS51375">
    <property type="entry name" value="PPR"/>
    <property type="match status" value="10"/>
</dbReference>
<gene>
    <name type="primary">PCMP-E25</name>
    <name type="ordered locus">At1g09220</name>
    <name type="ORF">T12M4.7</name>
</gene>
<comment type="subcellular location">
    <subcellularLocation>
        <location evidence="2">Mitochondrion</location>
    </subcellularLocation>
</comment>
<comment type="similarity">
    <text evidence="2">Belongs to the PPR family. PCMP-E subfamily.</text>
</comment>
<comment type="sequence caution" evidence="2">
    <conflict type="erroneous gene model prediction">
        <sequence resource="EMBL-CDS" id="AAC24094"/>
    </conflict>
</comment>
<comment type="online information" name="Pentatricopeptide repeat proteins">
    <link uri="https://ppr.plantenergy.uwa.edu.au"/>
</comment>
<feature type="transit peptide" description="Mitochondrion" evidence="1">
    <location>
        <begin position="1"/>
        <end position="87"/>
    </location>
</feature>
<feature type="chain" id="PRO_0000342765" description="Pentatricopeptide repeat-containing protein At1g09220, mitochondrial">
    <location>
        <begin position="88"/>
        <end position="504"/>
    </location>
</feature>
<feature type="repeat" description="PPR 1">
    <location>
        <begin position="76"/>
        <end position="110"/>
    </location>
</feature>
<feature type="repeat" description="PPR 2">
    <location>
        <begin position="120"/>
        <end position="156"/>
    </location>
</feature>
<feature type="repeat" description="PPR 3">
    <location>
        <begin position="157"/>
        <end position="187"/>
    </location>
</feature>
<feature type="repeat" description="PPR 4">
    <location>
        <begin position="188"/>
        <end position="222"/>
    </location>
</feature>
<feature type="repeat" description="PPR 5">
    <location>
        <begin position="223"/>
        <end position="253"/>
    </location>
</feature>
<feature type="repeat" description="PPR 6">
    <location>
        <begin position="255"/>
        <end position="289"/>
    </location>
</feature>
<feature type="repeat" description="PPR 7">
    <location>
        <begin position="291"/>
        <end position="321"/>
    </location>
</feature>
<feature type="repeat" description="PPR 8">
    <location>
        <begin position="324"/>
        <end position="358"/>
    </location>
</feature>
<feature type="repeat" description="PPR 9">
    <location>
        <begin position="359"/>
        <end position="390"/>
    </location>
</feature>
<feature type="repeat" description="PPR 10">
    <location>
        <begin position="396"/>
        <end position="430"/>
    </location>
</feature>
<feature type="region of interest" description="Type E motif; degenerate">
    <location>
        <begin position="431"/>
        <end position="504"/>
    </location>
</feature>
<name>PPR24_ARATH</name>
<evidence type="ECO:0000255" key="1"/>
<evidence type="ECO:0000305" key="2"/>
<reference key="1">
    <citation type="journal article" date="2000" name="Nature">
        <title>Sequence and analysis of chromosome 1 of the plant Arabidopsis thaliana.</title>
        <authorList>
            <person name="Theologis A."/>
            <person name="Ecker J.R."/>
            <person name="Palm C.J."/>
            <person name="Federspiel N.A."/>
            <person name="Kaul S."/>
            <person name="White O."/>
            <person name="Alonso J."/>
            <person name="Altafi H."/>
            <person name="Araujo R."/>
            <person name="Bowman C.L."/>
            <person name="Brooks S.Y."/>
            <person name="Buehler E."/>
            <person name="Chan A."/>
            <person name="Chao Q."/>
            <person name="Chen H."/>
            <person name="Cheuk R.F."/>
            <person name="Chin C.W."/>
            <person name="Chung M.K."/>
            <person name="Conn L."/>
            <person name="Conway A.B."/>
            <person name="Conway A.R."/>
            <person name="Creasy T.H."/>
            <person name="Dewar K."/>
            <person name="Dunn P."/>
            <person name="Etgu P."/>
            <person name="Feldblyum T.V."/>
            <person name="Feng J.-D."/>
            <person name="Fong B."/>
            <person name="Fujii C.Y."/>
            <person name="Gill J.E."/>
            <person name="Goldsmith A.D."/>
            <person name="Haas B."/>
            <person name="Hansen N.F."/>
            <person name="Hughes B."/>
            <person name="Huizar L."/>
            <person name="Hunter J.L."/>
            <person name="Jenkins J."/>
            <person name="Johnson-Hopson C."/>
            <person name="Khan S."/>
            <person name="Khaykin E."/>
            <person name="Kim C.J."/>
            <person name="Koo H.L."/>
            <person name="Kremenetskaia I."/>
            <person name="Kurtz D.B."/>
            <person name="Kwan A."/>
            <person name="Lam B."/>
            <person name="Langin-Hooper S."/>
            <person name="Lee A."/>
            <person name="Lee J.M."/>
            <person name="Lenz C.A."/>
            <person name="Li J.H."/>
            <person name="Li Y.-P."/>
            <person name="Lin X."/>
            <person name="Liu S.X."/>
            <person name="Liu Z.A."/>
            <person name="Luros J.S."/>
            <person name="Maiti R."/>
            <person name="Marziali A."/>
            <person name="Militscher J."/>
            <person name="Miranda M."/>
            <person name="Nguyen M."/>
            <person name="Nierman W.C."/>
            <person name="Osborne B.I."/>
            <person name="Pai G."/>
            <person name="Peterson J."/>
            <person name="Pham P.K."/>
            <person name="Rizzo M."/>
            <person name="Rooney T."/>
            <person name="Rowley D."/>
            <person name="Sakano H."/>
            <person name="Salzberg S.L."/>
            <person name="Schwartz J.R."/>
            <person name="Shinn P."/>
            <person name="Southwick A.M."/>
            <person name="Sun H."/>
            <person name="Tallon L.J."/>
            <person name="Tambunga G."/>
            <person name="Toriumi M.J."/>
            <person name="Town C.D."/>
            <person name="Utterback T."/>
            <person name="Van Aken S."/>
            <person name="Vaysberg M."/>
            <person name="Vysotskaia V.S."/>
            <person name="Walker M."/>
            <person name="Wu D."/>
            <person name="Yu G."/>
            <person name="Fraser C.M."/>
            <person name="Venter J.C."/>
            <person name="Davis R.W."/>
        </authorList>
    </citation>
    <scope>NUCLEOTIDE SEQUENCE [LARGE SCALE GENOMIC DNA]</scope>
    <source>
        <strain>cv. Columbia</strain>
    </source>
</reference>
<reference key="2">
    <citation type="journal article" date="2017" name="Plant J.">
        <title>Araport11: a complete reannotation of the Arabidopsis thaliana reference genome.</title>
        <authorList>
            <person name="Cheng C.Y."/>
            <person name="Krishnakumar V."/>
            <person name="Chan A.P."/>
            <person name="Thibaud-Nissen F."/>
            <person name="Schobel S."/>
            <person name="Town C.D."/>
        </authorList>
    </citation>
    <scope>GENOME REANNOTATION</scope>
    <source>
        <strain>cv. Columbia</strain>
    </source>
</reference>
<reference key="3">
    <citation type="submission" date="2005-03" db="EMBL/GenBank/DDBJ databases">
        <title>Large-scale analysis of RIKEN Arabidopsis full-length (RAFL) cDNAs.</title>
        <authorList>
            <person name="Totoki Y."/>
            <person name="Seki M."/>
            <person name="Ishida J."/>
            <person name="Nakajima M."/>
            <person name="Enju A."/>
            <person name="Kamiya A."/>
            <person name="Narusaka M."/>
            <person name="Shin-i T."/>
            <person name="Nakagawa M."/>
            <person name="Sakamoto N."/>
            <person name="Oishi K."/>
            <person name="Kohara Y."/>
            <person name="Kobayashi M."/>
            <person name="Toyoda A."/>
            <person name="Sakaki Y."/>
            <person name="Sakurai T."/>
            <person name="Iida K."/>
            <person name="Akiyama K."/>
            <person name="Satou M."/>
            <person name="Toyoda T."/>
            <person name="Konagaya A."/>
            <person name="Carninci P."/>
            <person name="Kawai J."/>
            <person name="Hayashizaki Y."/>
            <person name="Shinozaki K."/>
        </authorList>
    </citation>
    <scope>NUCLEOTIDE SEQUENCE [LARGE SCALE MRNA]</scope>
    <source>
        <strain>cv. Columbia</strain>
    </source>
</reference>
<reference key="4">
    <citation type="submission" date="2004-06" db="EMBL/GenBank/DDBJ databases">
        <title>Arabidopsis ORF clones.</title>
        <authorList>
            <person name="Cheuk R.F."/>
            <person name="Chen H."/>
            <person name="Kim C.J."/>
            <person name="Shinn P."/>
            <person name="Ecker J.R."/>
        </authorList>
    </citation>
    <scope>NUCLEOTIDE SEQUENCE [LARGE SCALE MRNA] OF 167-504</scope>
    <source>
        <strain>cv. Columbia</strain>
    </source>
</reference>
<reference key="5">
    <citation type="journal article" date="2000" name="Plant Mol. Biol.">
        <title>In Arabidopsis thaliana, 1% of the genome codes for a novel protein family unique to plants.</title>
        <authorList>
            <person name="Aubourg S."/>
            <person name="Boudet N."/>
            <person name="Kreis M."/>
            <person name="Lecharny A."/>
        </authorList>
    </citation>
    <scope>GENE FAMILY</scope>
</reference>
<reference key="6">
    <citation type="journal article" date="2004" name="Plant Cell">
        <title>Genome-wide analysis of Arabidopsis pentatricopeptide repeat proteins reveals their essential role in organelle biogenesis.</title>
        <authorList>
            <person name="Lurin C."/>
            <person name="Andres C."/>
            <person name="Aubourg S."/>
            <person name="Bellaoui M."/>
            <person name="Bitton F."/>
            <person name="Bruyere C."/>
            <person name="Caboche M."/>
            <person name="Debast C."/>
            <person name="Gualberto J."/>
            <person name="Hoffmann B."/>
            <person name="Lecharny A."/>
            <person name="Le Ret M."/>
            <person name="Martin-Magniette M.-L."/>
            <person name="Mireau H."/>
            <person name="Peeters N."/>
            <person name="Renou J.-P."/>
            <person name="Szurek B."/>
            <person name="Taconnat L."/>
            <person name="Small I."/>
        </authorList>
    </citation>
    <scope>GENE FAMILY</scope>
</reference>